<accession>Q4R8H1</accession>
<comment type="function">
    <text evidence="2">F-box-like protein involved in the recruitment of the ubiquitin/19S proteasome complex to nuclear receptor-regulated transcription units. Plays an essential role in transcription activation mediated by nuclear receptors. Probably acts as integral component of corepressor complexes that mediates the recruitment of the 19S proteasome complex, leading to the subsequent proteasomal degradation of transcription repressor complexes, thereby allowing cofactor exchange.</text>
</comment>
<comment type="subunit">
    <text evidence="2 5">Homotetramer; dimer of dimers. Component of the N-Cor repressor complex, at least composed of NCOR1, NCOR2, HDAC3, TBL1X, TBL1R, CORO2A and GPS2. Interacts with GPS2 (when sumoylated); leading to protect GPS2 against degradation by the proteasome. Component of a E3 ubiquitin ligase complex containing UBE2D1, SIAH1, CACYBP/SIP, SKP1, APC and TBL1X (By similarity). Probably part of other corepressor complexes, that do not contain NCOR1 and NCOR2. Interacts with histones H2B, H3a and H4. Interacts with MECP2; recruits TBL1X to the heterochromatin foci (By similarity). Interacts with USP44 (By similarity).</text>
</comment>
<comment type="subcellular location">
    <subcellularLocation>
        <location evidence="1">Nucleus</location>
    </subcellularLocation>
    <text evidence="5">Colocalized with MECP2 to the heterochromatin foci.</text>
</comment>
<comment type="similarity">
    <text evidence="8">Belongs to the WD repeat EBI family.</text>
</comment>
<evidence type="ECO:0000250" key="1"/>
<evidence type="ECO:0000250" key="2">
    <source>
        <dbReference type="UniProtKB" id="O60907"/>
    </source>
</evidence>
<evidence type="ECO:0000250" key="3">
    <source>
        <dbReference type="UniProtKB" id="Q8BHJ5"/>
    </source>
</evidence>
<evidence type="ECO:0000250" key="4">
    <source>
        <dbReference type="UniProtKB" id="Q9BZK7"/>
    </source>
</evidence>
<evidence type="ECO:0000250" key="5">
    <source>
        <dbReference type="UniProtKB" id="Q9QXE7"/>
    </source>
</evidence>
<evidence type="ECO:0000255" key="6">
    <source>
        <dbReference type="PROSITE-ProRule" id="PRU00126"/>
    </source>
</evidence>
<evidence type="ECO:0000256" key="7">
    <source>
        <dbReference type="SAM" id="MobiDB-lite"/>
    </source>
</evidence>
<evidence type="ECO:0000305" key="8"/>
<gene>
    <name type="primary">TBL1X</name>
    <name type="ORF">QtsA-12504</name>
</gene>
<feature type="chain" id="PRO_0000370190" description="F-box-like/WD repeat-containing protein TBL1X">
    <location>
        <begin position="1"/>
        <end position="569"/>
    </location>
</feature>
<feature type="domain" description="LisH" evidence="6">
    <location>
        <begin position="55"/>
        <end position="87"/>
    </location>
</feature>
<feature type="domain" description="F-box-like">
    <location>
        <begin position="92"/>
        <end position="137"/>
    </location>
</feature>
<feature type="repeat" description="WD 1">
    <location>
        <begin position="222"/>
        <end position="261"/>
    </location>
</feature>
<feature type="repeat" description="WD 2">
    <location>
        <begin position="278"/>
        <end position="317"/>
    </location>
</feature>
<feature type="repeat" description="WD 3">
    <location>
        <begin position="319"/>
        <end position="358"/>
    </location>
</feature>
<feature type="repeat" description="WD 4">
    <location>
        <begin position="361"/>
        <end position="401"/>
    </location>
</feature>
<feature type="repeat" description="WD 5">
    <location>
        <begin position="402"/>
        <end position="441"/>
    </location>
</feature>
<feature type="repeat" description="WD 6">
    <location>
        <begin position="444"/>
        <end position="492"/>
    </location>
</feature>
<feature type="repeat" description="WD 7">
    <location>
        <begin position="495"/>
        <end position="534"/>
    </location>
</feature>
<feature type="repeat" description="WD 8">
    <location>
        <begin position="536"/>
        <end position="568"/>
    </location>
</feature>
<feature type="region of interest" description="Disordered" evidence="7">
    <location>
        <begin position="170"/>
        <end position="195"/>
    </location>
</feature>
<feature type="modified residue" description="N6-acetyllysine" evidence="3">
    <location>
        <position position="153"/>
    </location>
</feature>
<feature type="modified residue" description="Phosphoserine" evidence="4">
    <location>
        <position position="175"/>
    </location>
</feature>
<feature type="cross-link" description="Glycyl lysine isopeptide (Lys-Gly) (interchain with G-Cter in SUMO2)" evidence="4">
    <location>
        <position position="332"/>
    </location>
</feature>
<reference key="1">
    <citation type="submission" date="2005-06" db="EMBL/GenBank/DDBJ databases">
        <title>DNA sequences of macaque genes expressed in brain or testis and its evolutionary implications.</title>
        <authorList>
            <consortium name="International consortium for macaque cDNA sequencing and analysis"/>
        </authorList>
    </citation>
    <scope>NUCLEOTIDE SEQUENCE [LARGE SCALE MRNA]</scope>
    <source>
        <tissue>Testis</tissue>
    </source>
</reference>
<dbReference type="EMBL" id="AB168481">
    <property type="protein sequence ID" value="BAE00601.1"/>
    <property type="molecule type" value="mRNA"/>
</dbReference>
<dbReference type="RefSeq" id="NP_001270300.1">
    <property type="nucleotide sequence ID" value="NM_001283371.1"/>
</dbReference>
<dbReference type="SMR" id="Q4R8H1"/>
<dbReference type="STRING" id="9541.ENSMFAP00000010176"/>
<dbReference type="eggNOG" id="KOG0273">
    <property type="taxonomic scope" value="Eukaryota"/>
</dbReference>
<dbReference type="Proteomes" id="UP000233100">
    <property type="component" value="Unplaced"/>
</dbReference>
<dbReference type="GO" id="GO:0000118">
    <property type="term" value="C:histone deacetylase complex"/>
    <property type="evidence" value="ECO:0007669"/>
    <property type="project" value="TreeGrafter"/>
</dbReference>
<dbReference type="GO" id="GO:0072686">
    <property type="term" value="C:mitotic spindle"/>
    <property type="evidence" value="ECO:0000250"/>
    <property type="project" value="UniProtKB"/>
</dbReference>
<dbReference type="GO" id="GO:0017053">
    <property type="term" value="C:transcription repressor complex"/>
    <property type="evidence" value="ECO:0000250"/>
    <property type="project" value="UniProtKB"/>
</dbReference>
<dbReference type="GO" id="GO:0042393">
    <property type="term" value="F:histone binding"/>
    <property type="evidence" value="ECO:0000250"/>
    <property type="project" value="UniProtKB"/>
</dbReference>
<dbReference type="GO" id="GO:0003714">
    <property type="term" value="F:transcription corepressor activity"/>
    <property type="evidence" value="ECO:0000250"/>
    <property type="project" value="UniProtKB"/>
</dbReference>
<dbReference type="GO" id="GO:0000122">
    <property type="term" value="P:negative regulation of transcription by RNA polymerase II"/>
    <property type="evidence" value="ECO:0000250"/>
    <property type="project" value="UniProtKB"/>
</dbReference>
<dbReference type="GO" id="GO:0090263">
    <property type="term" value="P:positive regulation of canonical Wnt signaling pathway"/>
    <property type="evidence" value="ECO:0000250"/>
    <property type="project" value="UniProtKB"/>
</dbReference>
<dbReference type="GO" id="GO:0045893">
    <property type="term" value="P:positive regulation of DNA-templated transcription"/>
    <property type="evidence" value="ECO:0000250"/>
    <property type="project" value="UniProtKB"/>
</dbReference>
<dbReference type="GO" id="GO:0045944">
    <property type="term" value="P:positive regulation of transcription by RNA polymerase II"/>
    <property type="evidence" value="ECO:0000250"/>
    <property type="project" value="UniProtKB"/>
</dbReference>
<dbReference type="GO" id="GO:0050821">
    <property type="term" value="P:protein stabilization"/>
    <property type="evidence" value="ECO:0000250"/>
    <property type="project" value="UniProtKB"/>
</dbReference>
<dbReference type="GO" id="GO:0006508">
    <property type="term" value="P:proteolysis"/>
    <property type="evidence" value="ECO:0000250"/>
    <property type="project" value="UniProtKB"/>
</dbReference>
<dbReference type="GO" id="GO:0007605">
    <property type="term" value="P:sensory perception of sound"/>
    <property type="evidence" value="ECO:0000250"/>
    <property type="project" value="UniProtKB"/>
</dbReference>
<dbReference type="CDD" id="cd00200">
    <property type="entry name" value="WD40"/>
    <property type="match status" value="1"/>
</dbReference>
<dbReference type="FunFam" id="1.20.960.30:FF:000001">
    <property type="entry name" value="F-box-like/WD repeat-containing protein TBL1XR1"/>
    <property type="match status" value="1"/>
</dbReference>
<dbReference type="FunFam" id="2.130.10.10:FF:000014">
    <property type="entry name" value="Putative F-box-like/WD repeat-containing protein TBL1XR1"/>
    <property type="match status" value="1"/>
</dbReference>
<dbReference type="Gene3D" id="1.20.960.30">
    <property type="match status" value="1"/>
</dbReference>
<dbReference type="Gene3D" id="2.130.10.10">
    <property type="entry name" value="YVTN repeat-like/Quinoprotein amine dehydrogenase"/>
    <property type="match status" value="1"/>
</dbReference>
<dbReference type="InterPro" id="IPR045183">
    <property type="entry name" value="Ebi-like"/>
</dbReference>
<dbReference type="InterPro" id="IPR020472">
    <property type="entry name" value="G-protein_beta_WD-40_rep"/>
</dbReference>
<dbReference type="InterPro" id="IPR006594">
    <property type="entry name" value="LisH"/>
</dbReference>
<dbReference type="InterPro" id="IPR011047">
    <property type="entry name" value="Quinoprotein_ADH-like_sf"/>
</dbReference>
<dbReference type="InterPro" id="IPR015943">
    <property type="entry name" value="WD40/YVTN_repeat-like_dom_sf"/>
</dbReference>
<dbReference type="InterPro" id="IPR019775">
    <property type="entry name" value="WD40_repeat_CS"/>
</dbReference>
<dbReference type="InterPro" id="IPR036322">
    <property type="entry name" value="WD40_repeat_dom_sf"/>
</dbReference>
<dbReference type="InterPro" id="IPR001680">
    <property type="entry name" value="WD40_rpt"/>
</dbReference>
<dbReference type="PANTHER" id="PTHR22846:SF52">
    <property type="entry name" value="F-BOX-LIKE_WD REPEAT-CONTAINING PROTEIN TBL1X"/>
    <property type="match status" value="1"/>
</dbReference>
<dbReference type="PANTHER" id="PTHR22846">
    <property type="entry name" value="WD40 REPEAT PROTEIN"/>
    <property type="match status" value="1"/>
</dbReference>
<dbReference type="Pfam" id="PF08513">
    <property type="entry name" value="LisH"/>
    <property type="match status" value="1"/>
</dbReference>
<dbReference type="Pfam" id="PF00400">
    <property type="entry name" value="WD40"/>
    <property type="match status" value="6"/>
</dbReference>
<dbReference type="PRINTS" id="PR00320">
    <property type="entry name" value="GPROTEINBRPT"/>
</dbReference>
<dbReference type="SMART" id="SM00667">
    <property type="entry name" value="LisH"/>
    <property type="match status" value="1"/>
</dbReference>
<dbReference type="SMART" id="SM00320">
    <property type="entry name" value="WD40"/>
    <property type="match status" value="8"/>
</dbReference>
<dbReference type="SUPFAM" id="SSF50998">
    <property type="entry name" value="Quinoprotein alcohol dehydrogenase-like"/>
    <property type="match status" value="1"/>
</dbReference>
<dbReference type="SUPFAM" id="SSF50978">
    <property type="entry name" value="WD40 repeat-like"/>
    <property type="match status" value="1"/>
</dbReference>
<dbReference type="PROSITE" id="PS50896">
    <property type="entry name" value="LISH"/>
    <property type="match status" value="1"/>
</dbReference>
<dbReference type="PROSITE" id="PS00678">
    <property type="entry name" value="WD_REPEATS_1"/>
    <property type="match status" value="4"/>
</dbReference>
<dbReference type="PROSITE" id="PS50082">
    <property type="entry name" value="WD_REPEATS_2"/>
    <property type="match status" value="6"/>
</dbReference>
<dbReference type="PROSITE" id="PS50294">
    <property type="entry name" value="WD_REPEATS_REGION"/>
    <property type="match status" value="1"/>
</dbReference>
<proteinExistence type="evidence at transcript level"/>
<protein>
    <recommendedName>
        <fullName>F-box-like/WD repeat-containing protein TBL1X</fullName>
    </recommendedName>
</protein>
<name>TBL1X_MACFA</name>
<sequence>MTELAGASSSCCHRPAGRGAMQSVLHHFQRLRGREGGSHFINTSSPRGEAKMSITSDEVNFLVYRYLQESGFSHSAFTFGIESHISQSNINGTLVPPAALISILQKGLQYVEAEISINEDGTVFDGRPIESLSLIDAVMPDVVQTRQRAFREKLAQQQASAAAAAAAATTSASVSQQNPSKNREATVNGEENRAHSVNNHAKPMEIDGEVDIPSSKATVLRGHESEVFICAWNPVSDLLASGSGDSTARIWNLNENSNGGSTQLVLRHCIREGGHDVPSNKDVTSLDWNTNGTLLATGSYDGFARIWTEDGNLASTLGQHKGPIFALKWNRKGNYILSAGVDKTTIIWDAHTGEAKQQFPFHSAPALDVDWQNNMTFASCSTDMCIHVCRLGCDRPVKTFQGHTNEVNAIKWDPSGMLLASCSDDMTLKIWSMKQEVCIHDLQAHNKEIYTIKWSPTGPATSNPNSNIMLASASFDSTVRLWDIERGVCTHTLTKHQEPVYSVAFSPDGRYLASGSFDKCVHIWNTQSGNLVHSYRGTGGIFEVCWNARGDKVGASASDGSVCVLDLRK</sequence>
<organism>
    <name type="scientific">Macaca fascicularis</name>
    <name type="common">Crab-eating macaque</name>
    <name type="synonym">Cynomolgus monkey</name>
    <dbReference type="NCBI Taxonomy" id="9541"/>
    <lineage>
        <taxon>Eukaryota</taxon>
        <taxon>Metazoa</taxon>
        <taxon>Chordata</taxon>
        <taxon>Craniata</taxon>
        <taxon>Vertebrata</taxon>
        <taxon>Euteleostomi</taxon>
        <taxon>Mammalia</taxon>
        <taxon>Eutheria</taxon>
        <taxon>Euarchontoglires</taxon>
        <taxon>Primates</taxon>
        <taxon>Haplorrhini</taxon>
        <taxon>Catarrhini</taxon>
        <taxon>Cercopithecidae</taxon>
        <taxon>Cercopithecinae</taxon>
        <taxon>Macaca</taxon>
    </lineage>
</organism>
<keyword id="KW-0007">Acetylation</keyword>
<keyword id="KW-0010">Activator</keyword>
<keyword id="KW-1017">Isopeptide bond</keyword>
<keyword id="KW-0539">Nucleus</keyword>
<keyword id="KW-0597">Phosphoprotein</keyword>
<keyword id="KW-1185">Reference proteome</keyword>
<keyword id="KW-0677">Repeat</keyword>
<keyword id="KW-0804">Transcription</keyword>
<keyword id="KW-0805">Transcription regulation</keyword>
<keyword id="KW-0832">Ubl conjugation</keyword>
<keyword id="KW-0833">Ubl conjugation pathway</keyword>
<keyword id="KW-0853">WD repeat</keyword>